<accession>A7FBZ7</accession>
<keyword id="KW-1003">Cell membrane</keyword>
<keyword id="KW-0472">Membrane</keyword>
<keyword id="KW-0812">Transmembrane</keyword>
<keyword id="KW-1133">Transmembrane helix</keyword>
<sequence length="52" mass="5462">MFRWAIIFAVIALIASLLGFGGVAGLSKDFAVILLVIAVILAVIGFISRGRT</sequence>
<proteinExistence type="inferred from homology"/>
<protein>
    <recommendedName>
        <fullName evidence="1">UPF0391 membrane protein A1S_3910</fullName>
    </recommendedName>
</protein>
<reference key="1">
    <citation type="journal article" date="2007" name="Genes Dev.">
        <title>New insights into Acinetobacter baumannii pathogenesis revealed by high-density pyrosequencing and transposon mutagenesis.</title>
        <authorList>
            <person name="Smith M.G."/>
            <person name="Gianoulis T.A."/>
            <person name="Pukatzki S."/>
            <person name="Mekalanos J.J."/>
            <person name="Ornston L.N."/>
            <person name="Gerstein M."/>
            <person name="Snyder M."/>
        </authorList>
    </citation>
    <scope>NUCLEOTIDE SEQUENCE [LARGE SCALE GENOMIC DNA]</scope>
    <source>
        <strain>ATCC 17978 / DSM 105126 / CIP 53.77 / LMG 1025 / NCDC KC755 / 5377</strain>
    </source>
</reference>
<name>Y3910_ACIBT</name>
<feature type="chain" id="PRO_1000143702" description="UPF0391 membrane protein A1S_3910">
    <location>
        <begin position="1"/>
        <end position="52"/>
    </location>
</feature>
<feature type="transmembrane region" description="Helical" evidence="1">
    <location>
        <begin position="6"/>
        <end position="26"/>
    </location>
</feature>
<feature type="transmembrane region" description="Helical" evidence="1">
    <location>
        <begin position="30"/>
        <end position="50"/>
    </location>
</feature>
<comment type="subcellular location">
    <subcellularLocation>
        <location evidence="1">Cell membrane</location>
        <topology evidence="1">Multi-pass membrane protein</topology>
    </subcellularLocation>
</comment>
<comment type="similarity">
    <text evidence="1">Belongs to the UPF0391 family.</text>
</comment>
<dbReference type="EMBL" id="CP000521">
    <property type="protein sequence ID" value="ABS90335.2"/>
    <property type="molecule type" value="Genomic_DNA"/>
</dbReference>
<dbReference type="RefSeq" id="WP_000490267.1">
    <property type="nucleotide sequence ID" value="NZ_CP053098.1"/>
</dbReference>
<dbReference type="KEGG" id="acb:A1S_3910"/>
<dbReference type="HOGENOM" id="CLU_187346_2_0_6"/>
<dbReference type="GO" id="GO:0005886">
    <property type="term" value="C:plasma membrane"/>
    <property type="evidence" value="ECO:0007669"/>
    <property type="project" value="UniProtKB-SubCell"/>
</dbReference>
<dbReference type="HAMAP" id="MF_01361">
    <property type="entry name" value="UPF0391"/>
    <property type="match status" value="1"/>
</dbReference>
<dbReference type="InterPro" id="IPR009760">
    <property type="entry name" value="DUF1328"/>
</dbReference>
<dbReference type="NCBIfam" id="NF010227">
    <property type="entry name" value="PRK13682.1-2"/>
    <property type="match status" value="1"/>
</dbReference>
<dbReference type="NCBIfam" id="NF010229">
    <property type="entry name" value="PRK13682.1-4"/>
    <property type="match status" value="1"/>
</dbReference>
<dbReference type="Pfam" id="PF07043">
    <property type="entry name" value="DUF1328"/>
    <property type="match status" value="1"/>
</dbReference>
<dbReference type="PIRSF" id="PIRSF036466">
    <property type="entry name" value="UCP036466"/>
    <property type="match status" value="1"/>
</dbReference>
<gene>
    <name type="ordered locus">A1S_3910</name>
</gene>
<evidence type="ECO:0000255" key="1">
    <source>
        <dbReference type="HAMAP-Rule" id="MF_01361"/>
    </source>
</evidence>
<organism>
    <name type="scientific">Acinetobacter baumannii (strain ATCC 17978 / DSM 105126 / CIP 53.77 / LMG 1025 / NCDC KC755 / 5377)</name>
    <dbReference type="NCBI Taxonomy" id="400667"/>
    <lineage>
        <taxon>Bacteria</taxon>
        <taxon>Pseudomonadati</taxon>
        <taxon>Pseudomonadota</taxon>
        <taxon>Gammaproteobacteria</taxon>
        <taxon>Moraxellales</taxon>
        <taxon>Moraxellaceae</taxon>
        <taxon>Acinetobacter</taxon>
        <taxon>Acinetobacter calcoaceticus/baumannii complex</taxon>
    </lineage>
</organism>